<comment type="function">
    <text evidence="4 5">Promotes the emission of terpenes volatile organic compounds (VOC) in response to damage mediated by arthropod herbivores (e.g. Spodoptera exigua), probably to attract natural enemies of the herbivores.</text>
</comment>
<comment type="catalytic activity">
    <reaction evidence="5">
        <text>(2E)-geranyl diphosphate = tricyclene + diphosphate</text>
        <dbReference type="Rhea" id="RHEA:32687"/>
        <dbReference type="ChEBI" id="CHEBI:33019"/>
        <dbReference type="ChEBI" id="CHEBI:58057"/>
        <dbReference type="ChEBI" id="CHEBI:64266"/>
        <dbReference type="EC" id="4.2.3.105"/>
    </reaction>
</comment>
<comment type="catalytic activity">
    <reaction evidence="5">
        <text>(2E)-geranyl diphosphate = (E)-beta-ocimene + diphosphate</text>
        <dbReference type="Rhea" id="RHEA:32691"/>
        <dbReference type="ChEBI" id="CHEBI:33019"/>
        <dbReference type="ChEBI" id="CHEBI:58057"/>
        <dbReference type="ChEBI" id="CHEBI:64280"/>
        <dbReference type="EC" id="4.2.3.106"/>
    </reaction>
</comment>
<comment type="cofactor">
    <cofactor evidence="1">
        <name>Mg(2+)</name>
        <dbReference type="ChEBI" id="CHEBI:18420"/>
    </cofactor>
    <cofactor evidence="1">
        <name>Mn(2+)</name>
        <dbReference type="ChEBI" id="CHEBI:29035"/>
    </cofactor>
    <text evidence="1">Binds 3 Mg(2+) or Mn(2+) ions per subunit.</text>
</comment>
<comment type="pathway">
    <text>Secondary metabolite biosynthesis; terpenoid biosynthesis.</text>
</comment>
<comment type="subcellular location">
    <subcellularLocation>
        <location evidence="4">Plastid</location>
        <location evidence="4">Chloroplast stroma</location>
    </subcellularLocation>
</comment>
<comment type="tissue specificity">
    <text evidence="5">Expressed in leaves.</text>
</comment>
<comment type="induction">
    <text evidence="4">Accumulates in response to wounding, methyl jasmonate (meJA) and infection by Spodoptera exigua (beet armyworm), a lepidopteran herbivory. Also induced by lepidopteran oral secretions.</text>
</comment>
<comment type="domain">
    <text evidence="2">The Asp-Asp-Xaa-Xaa-Asp/Glu (DDXXD/E) motif is important for the catalytic activity, presumably through binding to Mg(2+).</text>
</comment>
<comment type="similarity">
    <text evidence="6">Belongs to the terpene synthase family. Tpsb subfamily.</text>
</comment>
<evidence type="ECO:0000250" key="1">
    <source>
        <dbReference type="UniProtKB" id="A0A1C9J6A7"/>
    </source>
</evidence>
<evidence type="ECO:0000250" key="2">
    <source>
        <dbReference type="UniProtKB" id="Q40577"/>
    </source>
</evidence>
<evidence type="ECO:0000255" key="3"/>
<evidence type="ECO:0000269" key="4">
    <source>
    </source>
</evidence>
<evidence type="ECO:0000269" key="5">
    <source>
    </source>
</evidence>
<evidence type="ECO:0000305" key="6"/>
<feature type="transit peptide" description="Chloroplast" evidence="3">
    <location>
        <begin position="1"/>
        <end position="41"/>
    </location>
</feature>
<feature type="chain" id="PRO_0000418165" description="Tricyclene synthase TPS4, chloroplastic">
    <location>
        <begin position="42"/>
        <end position="580"/>
    </location>
</feature>
<feature type="short sequence motif" description="DDXXD motif" evidence="2">
    <location>
        <begin position="334"/>
        <end position="338"/>
    </location>
</feature>
<feature type="binding site" evidence="2">
    <location>
        <position position="296"/>
    </location>
    <ligand>
        <name>(2E)-geranyl diphosphate</name>
        <dbReference type="ChEBI" id="CHEBI:58057"/>
    </ligand>
</feature>
<feature type="binding site" evidence="2">
    <location>
        <position position="334"/>
    </location>
    <ligand>
        <name>(2E)-geranyl diphosphate</name>
        <dbReference type="ChEBI" id="CHEBI:58057"/>
    </ligand>
</feature>
<feature type="binding site" evidence="2">
    <location>
        <position position="334"/>
    </location>
    <ligand>
        <name>Mg(2+)</name>
        <dbReference type="ChEBI" id="CHEBI:18420"/>
        <label>1</label>
    </ligand>
</feature>
<feature type="binding site" evidence="2">
    <location>
        <position position="334"/>
    </location>
    <ligand>
        <name>Mg(2+)</name>
        <dbReference type="ChEBI" id="CHEBI:18420"/>
        <label>2</label>
    </ligand>
</feature>
<feature type="binding site" evidence="2">
    <location>
        <position position="338"/>
    </location>
    <ligand>
        <name>(2E)-geranyl diphosphate</name>
        <dbReference type="ChEBI" id="CHEBI:58057"/>
    </ligand>
</feature>
<feature type="binding site" evidence="2">
    <location>
        <position position="338"/>
    </location>
    <ligand>
        <name>Mg(2+)</name>
        <dbReference type="ChEBI" id="CHEBI:18420"/>
        <label>1</label>
    </ligand>
</feature>
<feature type="binding site" evidence="2">
    <location>
        <position position="338"/>
    </location>
    <ligand>
        <name>Mg(2+)</name>
        <dbReference type="ChEBI" id="CHEBI:18420"/>
        <label>2</label>
    </ligand>
</feature>
<feature type="binding site" evidence="2">
    <location>
        <position position="475"/>
    </location>
    <ligand>
        <name>(2E)-geranyl diphosphate</name>
        <dbReference type="ChEBI" id="CHEBI:58057"/>
    </ligand>
</feature>
<feature type="binding site" evidence="2">
    <location>
        <position position="478"/>
    </location>
    <ligand>
        <name>(2E)-geranyl diphosphate</name>
        <dbReference type="ChEBI" id="CHEBI:58057"/>
    </ligand>
</feature>
<feature type="binding site" evidence="2">
    <location>
        <position position="478"/>
    </location>
    <ligand>
        <name>Mg(2+)</name>
        <dbReference type="ChEBI" id="CHEBI:18420"/>
        <label>3</label>
    </ligand>
</feature>
<feature type="binding site" evidence="2">
    <location>
        <position position="482"/>
    </location>
    <ligand>
        <name>Mg(2+)</name>
        <dbReference type="ChEBI" id="CHEBI:18420"/>
        <label>3</label>
    </ligand>
</feature>
<feature type="binding site" evidence="2">
    <location>
        <position position="486"/>
    </location>
    <ligand>
        <name>Mg(2+)</name>
        <dbReference type="ChEBI" id="CHEBI:18420"/>
        <label>3</label>
    </ligand>
</feature>
<feature type="sequence conflict" description="In Ref. 2; ACJ85620." evidence="6" ref="2">
    <original>K</original>
    <variation>R</variation>
    <location>
        <position position="84"/>
    </location>
</feature>
<feature type="sequence conflict" description="In Ref. 2; ACJ85620." evidence="6" ref="2">
    <original>I</original>
    <variation>T</variation>
    <location>
        <position position="220"/>
    </location>
</feature>
<feature type="sequence conflict" description="In Ref. 2; ACJ85620." evidence="6" ref="2">
    <original>T</original>
    <variation>N</variation>
    <location>
        <position position="377"/>
    </location>
</feature>
<feature type="sequence conflict" description="In Ref. 2; ACJ85620." evidence="6" ref="2">
    <original>AELERG</original>
    <variation>VKKKKK</variation>
    <location>
        <begin position="485"/>
        <end position="490"/>
    </location>
</feature>
<sequence>MLLNSSFISLPSFFKSQELGRTNLLIHRNGSPLLCYATNTNVSQRKSANYQPNIWNYDILQSLKHDYEDARYVDRSRRLQEEVKRMIKDENVNILELIDTVKQLGLSYHFEEEIGEALDRFLSLEKCSGRNNFGRSLHETALRFRLLREYGYDISPDIFEKFKDHNGNFKACLVQDIKGMLSLYDASFLSYEGEQILDEANAFTSIHLKDLSEGRSSILIDQVNHSLELPLYRRVQSLEARWFIDSYENRKDANKVLLEAAKLNFNIVQSTLQQDLKEMSRWWKGMGLAPRLSFGRDRLMECFFWAAGMTPFEPQFSNIRKGLTKVCSLITLIDDIYDVYGTLDELELFTTAVESWDINAIQILPEYMKIFFLALYTTVNDFTYDTIKETGHDILPYLVKVWSDMLKAFLQEAKWCHNKHMPKFDDYLNNAWVSVSGVVLLTHSYFLLNRNITKEGLGYLENCPMLLQTPSIIFRLCNDLATSSAELERGEGANSIICYMNENGVSEEVAYKHIQNLLDQTWKKMNKDRVINSPSSKYFSETIINLARISHCTYQYGDGHGAPDTLAKNRIKALILEPIN</sequence>
<reference key="1">
    <citation type="journal article" date="2005" name="Arch. Insect Biochem. Physiol.">
        <title>Lepidopteran herbivory and oral factors induce transcripts encoding novel terpene synthases in Medicago truncatula.</title>
        <authorList>
            <person name="Gomez S.K."/>
            <person name="Cox M.M."/>
            <person name="Bede J.C."/>
            <person name="Inoue K."/>
            <person name="Alborn H.T."/>
            <person name="Tumlinson J.H."/>
            <person name="Korth K.L."/>
        </authorList>
    </citation>
    <scope>NUCLEOTIDE SEQUENCE [MRNA]</scope>
    <scope>FUNCTION</scope>
    <scope>INDUCTION BY WOUNDING; JASMONIC ACID AND LEPIDOPTERAN HERBIVORES</scope>
    <scope>SUBCELLULAR LOCATION</scope>
    <source>
        <strain>cv. Jemalong A17</strain>
        <tissue>Leaf</tissue>
    </source>
</reference>
<reference key="2">
    <citation type="submission" date="2008-12" db="EMBL/GenBank/DDBJ databases">
        <title>Medicago truncatula full length cDNA cloning project.</title>
        <authorList>
            <person name="Moskal W."/>
            <person name="Chan A."/>
            <person name="Cheung F."/>
            <person name="Xiao Y."/>
            <person name="Town C.D."/>
        </authorList>
    </citation>
    <scope>NUCLEOTIDE SEQUENCE [LARGE SCALE MRNA] OF 1-490</scope>
</reference>
<reference key="3">
    <citation type="journal article" date="2009" name="Plant Physiol. Biochem.">
        <title>Medicago truncatula (E)-beta-ocimene synthase is induced by insect herbivory with corresponding increases in emission of volatile ocimene.</title>
        <authorList>
            <person name="Navia-Gine W.G."/>
            <person name="Yuan J.S."/>
            <person name="Mauromoustakos A."/>
            <person name="Murphy J.B."/>
            <person name="Chen F."/>
            <person name="Korth K.L."/>
        </authorList>
    </citation>
    <scope>FUNCTION</scope>
    <scope>TISSUE SPECIFICITY</scope>
    <scope>CATALYTIC ACTIVITY</scope>
    <source>
        <strain>cv. Jemalong A17</strain>
    </source>
</reference>
<name>TPS4_MEDTR</name>
<protein>
    <recommendedName>
        <fullName>Tricyclene synthase TPS4, chloroplastic</fullName>
        <ecNumber evidence="5">4.2.3.105</ecNumber>
    </recommendedName>
    <alternativeName>
        <fullName>(E)-beta-ocimene synthase</fullName>
        <shortName>MtEBOS</shortName>
        <shortName>MtEbetaOS</shortName>
        <ecNumber evidence="5">4.2.3.106</ecNumber>
    </alternativeName>
    <alternativeName>
        <fullName>Terpenoid synthase 4</fullName>
        <shortName>MtTPS4</shortName>
    </alternativeName>
</protein>
<proteinExistence type="evidence at protein level"/>
<organism>
    <name type="scientific">Medicago truncatula</name>
    <name type="common">Barrel medic</name>
    <name type="synonym">Medicago tribuloides</name>
    <dbReference type="NCBI Taxonomy" id="3880"/>
    <lineage>
        <taxon>Eukaryota</taxon>
        <taxon>Viridiplantae</taxon>
        <taxon>Streptophyta</taxon>
        <taxon>Embryophyta</taxon>
        <taxon>Tracheophyta</taxon>
        <taxon>Spermatophyta</taxon>
        <taxon>Magnoliopsida</taxon>
        <taxon>eudicotyledons</taxon>
        <taxon>Gunneridae</taxon>
        <taxon>Pentapetalae</taxon>
        <taxon>rosids</taxon>
        <taxon>fabids</taxon>
        <taxon>Fabales</taxon>
        <taxon>Fabaceae</taxon>
        <taxon>Papilionoideae</taxon>
        <taxon>50 kb inversion clade</taxon>
        <taxon>NPAAA clade</taxon>
        <taxon>Hologalegina</taxon>
        <taxon>IRL clade</taxon>
        <taxon>Trifolieae</taxon>
        <taxon>Medicago</taxon>
    </lineage>
</organism>
<gene>
    <name type="primary">TPS4</name>
</gene>
<dbReference type="EC" id="4.2.3.105" evidence="5"/>
<dbReference type="EC" id="4.2.3.106" evidence="5"/>
<dbReference type="EMBL" id="AY766248">
    <property type="protein sequence ID" value="AAV36465.1"/>
    <property type="molecule type" value="mRNA"/>
</dbReference>
<dbReference type="EMBL" id="BT052958">
    <property type="protein sequence ID" value="ACJ85620.1"/>
    <property type="molecule type" value="mRNA"/>
</dbReference>
<dbReference type="SMR" id="Q5UB07"/>
<dbReference type="PaxDb" id="3880-AES99514"/>
<dbReference type="KEGG" id="ag:AAV36465"/>
<dbReference type="BRENDA" id="4.2.3.106">
    <property type="organism ID" value="3201"/>
</dbReference>
<dbReference type="UniPathway" id="UPA00213"/>
<dbReference type="GO" id="GO:0009570">
    <property type="term" value="C:chloroplast stroma"/>
    <property type="evidence" value="ECO:0000314"/>
    <property type="project" value="UniProtKB"/>
</dbReference>
<dbReference type="GO" id="GO:0034768">
    <property type="term" value="F:(E)-beta-ocimene synthase activity"/>
    <property type="evidence" value="ECO:0007669"/>
    <property type="project" value="UniProtKB-EC"/>
</dbReference>
<dbReference type="GO" id="GO:0000287">
    <property type="term" value="F:magnesium ion binding"/>
    <property type="evidence" value="ECO:0007669"/>
    <property type="project" value="InterPro"/>
</dbReference>
<dbReference type="GO" id="GO:0010333">
    <property type="term" value="F:terpene synthase activity"/>
    <property type="evidence" value="ECO:0000314"/>
    <property type="project" value="UniProtKB"/>
</dbReference>
<dbReference type="GO" id="GO:0102701">
    <property type="term" value="F:tricyclene synthase activity"/>
    <property type="evidence" value="ECO:0007669"/>
    <property type="project" value="UniProtKB-EC"/>
</dbReference>
<dbReference type="GO" id="GO:0006952">
    <property type="term" value="P:defense response"/>
    <property type="evidence" value="ECO:0007669"/>
    <property type="project" value="UniProtKB-KW"/>
</dbReference>
<dbReference type="GO" id="GO:0016102">
    <property type="term" value="P:diterpenoid biosynthetic process"/>
    <property type="evidence" value="ECO:0007669"/>
    <property type="project" value="InterPro"/>
</dbReference>
<dbReference type="GO" id="GO:0080027">
    <property type="term" value="P:response to herbivore"/>
    <property type="evidence" value="ECO:0000270"/>
    <property type="project" value="UniProtKB"/>
</dbReference>
<dbReference type="GO" id="GO:0009753">
    <property type="term" value="P:response to jasmonic acid"/>
    <property type="evidence" value="ECO:0000270"/>
    <property type="project" value="UniProtKB"/>
</dbReference>
<dbReference type="GO" id="GO:0009611">
    <property type="term" value="P:response to wounding"/>
    <property type="evidence" value="ECO:0000270"/>
    <property type="project" value="UniProtKB"/>
</dbReference>
<dbReference type="CDD" id="cd00684">
    <property type="entry name" value="Terpene_cyclase_plant_C1"/>
    <property type="match status" value="1"/>
</dbReference>
<dbReference type="FunFam" id="1.10.600.10:FF:000007">
    <property type="entry name" value="Isoprene synthase, chloroplastic"/>
    <property type="match status" value="1"/>
</dbReference>
<dbReference type="FunFam" id="1.50.10.130:FF:000001">
    <property type="entry name" value="Isoprene synthase, chloroplastic"/>
    <property type="match status" value="1"/>
</dbReference>
<dbReference type="Gene3D" id="1.10.600.10">
    <property type="entry name" value="Farnesyl Diphosphate Synthase"/>
    <property type="match status" value="1"/>
</dbReference>
<dbReference type="Gene3D" id="1.50.10.130">
    <property type="entry name" value="Terpene synthase, N-terminal domain"/>
    <property type="match status" value="1"/>
</dbReference>
<dbReference type="InterPro" id="IPR008949">
    <property type="entry name" value="Isoprenoid_synthase_dom_sf"/>
</dbReference>
<dbReference type="InterPro" id="IPR034741">
    <property type="entry name" value="Terpene_cyclase-like_1_C"/>
</dbReference>
<dbReference type="InterPro" id="IPR044814">
    <property type="entry name" value="Terpene_cyclase_plant_C1"/>
</dbReference>
<dbReference type="InterPro" id="IPR001906">
    <property type="entry name" value="Terpene_synth_N"/>
</dbReference>
<dbReference type="InterPro" id="IPR036965">
    <property type="entry name" value="Terpene_synth_N_sf"/>
</dbReference>
<dbReference type="InterPro" id="IPR050148">
    <property type="entry name" value="Terpene_synthase-like"/>
</dbReference>
<dbReference type="InterPro" id="IPR005630">
    <property type="entry name" value="Terpene_synthase_metal-bd"/>
</dbReference>
<dbReference type="InterPro" id="IPR008930">
    <property type="entry name" value="Terpenoid_cyclase/PrenylTrfase"/>
</dbReference>
<dbReference type="PANTHER" id="PTHR31225">
    <property type="entry name" value="OS04G0344100 PROTEIN-RELATED"/>
    <property type="match status" value="1"/>
</dbReference>
<dbReference type="PANTHER" id="PTHR31225:SF252">
    <property type="entry name" value="TERPENE SYNTHASE 12-RELATED"/>
    <property type="match status" value="1"/>
</dbReference>
<dbReference type="Pfam" id="PF01397">
    <property type="entry name" value="Terpene_synth"/>
    <property type="match status" value="1"/>
</dbReference>
<dbReference type="Pfam" id="PF03936">
    <property type="entry name" value="Terpene_synth_C"/>
    <property type="match status" value="1"/>
</dbReference>
<dbReference type="SFLD" id="SFLDS00005">
    <property type="entry name" value="Isoprenoid_Synthase_Type_I"/>
    <property type="match status" value="1"/>
</dbReference>
<dbReference type="SFLD" id="SFLDG01019">
    <property type="entry name" value="Terpene_Cyclase_Like_1_C_Termi"/>
    <property type="match status" value="1"/>
</dbReference>
<dbReference type="SUPFAM" id="SSF48239">
    <property type="entry name" value="Terpenoid cyclases/Protein prenyltransferases"/>
    <property type="match status" value="1"/>
</dbReference>
<dbReference type="SUPFAM" id="SSF48576">
    <property type="entry name" value="Terpenoid synthases"/>
    <property type="match status" value="1"/>
</dbReference>
<keyword id="KW-0150">Chloroplast</keyword>
<keyword id="KW-0456">Lyase</keyword>
<keyword id="KW-0460">Magnesium</keyword>
<keyword id="KW-0464">Manganese</keyword>
<keyword id="KW-0479">Metal-binding</keyword>
<keyword id="KW-0611">Plant defense</keyword>
<keyword id="KW-0934">Plastid</keyword>
<keyword id="KW-0809">Transit peptide</keyword>
<accession>Q5UB07</accession>
<accession>B7FLI6</accession>